<organismHost>
    <name type="scientific">Homo sapiens</name>
    <name type="common">Human</name>
    <dbReference type="NCBI Taxonomy" id="9606"/>
</organismHost>
<organism>
    <name type="scientific">Human immunodeficiency virus type 1 group M subtype B (isolate WMJ1)</name>
    <name type="common">HIV-1</name>
    <dbReference type="NCBI Taxonomy" id="31678"/>
    <lineage>
        <taxon>Viruses</taxon>
        <taxon>Riboviria</taxon>
        <taxon>Pararnavirae</taxon>
        <taxon>Artverviricota</taxon>
        <taxon>Revtraviricetes</taxon>
        <taxon>Ortervirales</taxon>
        <taxon>Retroviridae</taxon>
        <taxon>Orthoretrovirinae</taxon>
        <taxon>Lentivirus</taxon>
        <taxon>Human immunodeficiency virus type 1</taxon>
    </lineage>
</organism>
<accession>P31872</accession>
<dbReference type="PIR" id="A24774">
    <property type="entry name" value="VCLJ3W"/>
</dbReference>
<dbReference type="PDB" id="1LB0">
    <property type="method" value="NMR"/>
    <property type="chains" value="A=659-671"/>
</dbReference>
<dbReference type="PDB" id="1LCX">
    <property type="method" value="NMR"/>
    <property type="chains" value="A=659-671"/>
</dbReference>
<dbReference type="PDBsum" id="1LB0"/>
<dbReference type="PDBsum" id="1LCX"/>
<dbReference type="SMR" id="P31872"/>
<dbReference type="GlyCosmos" id="P31872">
    <property type="glycosylation" value="26 sites, No reported glycans"/>
</dbReference>
<dbReference type="Reactome" id="R-HSA-5621480">
    <property type="pathway name" value="Dectin-2 family"/>
</dbReference>
<dbReference type="EvolutionaryTrace" id="P31872"/>
<dbReference type="GO" id="GO:0044175">
    <property type="term" value="C:host cell endosome membrane"/>
    <property type="evidence" value="ECO:0007669"/>
    <property type="project" value="UniProtKB-SubCell"/>
</dbReference>
<dbReference type="GO" id="GO:0020002">
    <property type="term" value="C:host cell plasma membrane"/>
    <property type="evidence" value="ECO:0007669"/>
    <property type="project" value="UniProtKB-SubCell"/>
</dbReference>
<dbReference type="GO" id="GO:0016020">
    <property type="term" value="C:membrane"/>
    <property type="evidence" value="ECO:0007669"/>
    <property type="project" value="UniProtKB-UniRule"/>
</dbReference>
<dbReference type="GO" id="GO:0019031">
    <property type="term" value="C:viral envelope"/>
    <property type="evidence" value="ECO:0007669"/>
    <property type="project" value="UniProtKB-KW"/>
</dbReference>
<dbReference type="GO" id="GO:0055036">
    <property type="term" value="C:virion membrane"/>
    <property type="evidence" value="ECO:0007669"/>
    <property type="project" value="UniProtKB-SubCell"/>
</dbReference>
<dbReference type="GO" id="GO:0005198">
    <property type="term" value="F:structural molecule activity"/>
    <property type="evidence" value="ECO:0007669"/>
    <property type="project" value="UniProtKB-UniRule"/>
</dbReference>
<dbReference type="GO" id="GO:0075512">
    <property type="term" value="P:clathrin-dependent endocytosis of virus by host cell"/>
    <property type="evidence" value="ECO:0007669"/>
    <property type="project" value="UniProtKB-UniRule"/>
</dbReference>
<dbReference type="GO" id="GO:0039654">
    <property type="term" value="P:fusion of virus membrane with host endosome membrane"/>
    <property type="evidence" value="ECO:0007669"/>
    <property type="project" value="UniProtKB-UniRule"/>
</dbReference>
<dbReference type="GO" id="GO:0019064">
    <property type="term" value="P:fusion of virus membrane with host plasma membrane"/>
    <property type="evidence" value="ECO:0007669"/>
    <property type="project" value="UniProtKB-UniRule"/>
</dbReference>
<dbReference type="GO" id="GO:1903908">
    <property type="term" value="P:positive regulation of plasma membrane raft polarization"/>
    <property type="evidence" value="ECO:0007669"/>
    <property type="project" value="UniProtKB-UniRule"/>
</dbReference>
<dbReference type="GO" id="GO:1903911">
    <property type="term" value="P:positive regulation of receptor clustering"/>
    <property type="evidence" value="ECO:0007669"/>
    <property type="project" value="UniProtKB-UniRule"/>
</dbReference>
<dbReference type="GO" id="GO:0019082">
    <property type="term" value="P:viral protein processing"/>
    <property type="evidence" value="ECO:0007669"/>
    <property type="project" value="UniProtKB-UniRule"/>
</dbReference>
<dbReference type="GO" id="GO:0019062">
    <property type="term" value="P:virion attachment to host cell"/>
    <property type="evidence" value="ECO:0007669"/>
    <property type="project" value="UniProtKB-UniRule"/>
</dbReference>
<dbReference type="CDD" id="cd09909">
    <property type="entry name" value="HIV-1-like_HR1-HR2"/>
    <property type="match status" value="1"/>
</dbReference>
<dbReference type="FunFam" id="1.10.287.210:FF:000001">
    <property type="entry name" value="Envelope glycoprotein gp160"/>
    <property type="match status" value="1"/>
</dbReference>
<dbReference type="FunFam" id="1.20.5.490:FF:000001">
    <property type="entry name" value="Envelope glycoprotein gp160"/>
    <property type="match status" value="1"/>
</dbReference>
<dbReference type="FunFam" id="2.170.40.20:FF:000003">
    <property type="entry name" value="Envelope glycoprotein gp160"/>
    <property type="match status" value="1"/>
</dbReference>
<dbReference type="FunFam" id="2.170.40.20:FF:000004">
    <property type="entry name" value="Envelope glycoprotein gp160"/>
    <property type="match status" value="1"/>
</dbReference>
<dbReference type="Gene3D" id="1.10.287.210">
    <property type="match status" value="1"/>
</dbReference>
<dbReference type="Gene3D" id="2.170.40.20">
    <property type="entry name" value="Human immunodeficiency virus 1, Gp160, envelope glycoprotein"/>
    <property type="match status" value="2"/>
</dbReference>
<dbReference type="Gene3D" id="1.20.5.490">
    <property type="entry name" value="Single helix bin"/>
    <property type="match status" value="1"/>
</dbReference>
<dbReference type="HAMAP" id="MF_04083">
    <property type="entry name" value="HIV_ENV"/>
    <property type="match status" value="1"/>
</dbReference>
<dbReference type="InterPro" id="IPR036377">
    <property type="entry name" value="Gp120_core_sf"/>
</dbReference>
<dbReference type="InterPro" id="IPR037527">
    <property type="entry name" value="Gp160"/>
</dbReference>
<dbReference type="InterPro" id="IPR000328">
    <property type="entry name" value="GP41-like"/>
</dbReference>
<dbReference type="InterPro" id="IPR000777">
    <property type="entry name" value="HIV1_Gp120"/>
</dbReference>
<dbReference type="Pfam" id="PF00516">
    <property type="entry name" value="GP120"/>
    <property type="match status" value="2"/>
</dbReference>
<dbReference type="Pfam" id="PF00517">
    <property type="entry name" value="GP41"/>
    <property type="match status" value="1"/>
</dbReference>
<dbReference type="SUPFAM" id="SSF56502">
    <property type="entry name" value="gp120 core"/>
    <property type="match status" value="2"/>
</dbReference>
<dbReference type="SUPFAM" id="SSF58069">
    <property type="entry name" value="Virus ectodomain"/>
    <property type="match status" value="1"/>
</dbReference>
<sequence length="856" mass="97526">MRVKGIRRNCQHLWIWGTMLFGMWMICSAVEQLWVTVYYGVPVWKEATTTLFCASDAKAYSTEAHKVWATHACVPTNPNPQEVVLENVTENFNMWKNNMVEQMHEDIISLWDQSLKPCVKLTPLCVTLNCIDKNITDWENKTIIGGGEVKNCSFNITTSIRDKVHKEYALFYKLDVVPIKSNNDSSTYTRYRLIHCNTSVITQACSKVSFEPIPIHYCAPAGFAILKCNDKKFNGTGPCTNVSTVQCTHGIRPVVSTQLLLNGSLAEEEIVIRSENFTDNAKTIIVHLNESVEINCTRPNNNVRRRHIHIGPGRAFYTGEIRGNIRQAHCNISRAKWNNTLKQIVEKLREQFKNKTIVFNHSSGGDPEIVTHSFNCGGEFFYCDSTQLFNSTWNVTGISTEGNNNTEENGDTITLPCRIKQIINMWQGVGKAMYAPPIGGQIRCSSNITGLLLTRDGGNSSSREEIFRPGGGNMRDNWRSELYKYKVVKIEPLGVAPTKAKRRVVQREKRAVGAIGAMFLGFLGAAGSTMGAASLTLTVQARQLLSGIVQQQNNLLRAIEAQQHLLQLTVWGIKQLQARVLAVERYLRDQQLLGIWGCSGKLICTTTVPWNASWSNKSMDQIWNNMTWMEWEREIDNYTSLIYNLIEESQNQQEKNEQELLELDKWASLWNWFSITNWLWYIKIFIMIVGGLVGLRIVFSVLSIVNRVRQGYSPLSFQTHLPTPRGPDRPEGTEEEGGERDRDRSVRLVHGFLALIWDDLRSLCLFSYHRLRDLLLIVTRIVELLGRRGWEALKYWWNLLQYWSKELKNSAVGLLNAIAIAVAEGTDRVIEVVQRICRAIIHIPRRIRQGLERALL</sequence>
<gene>
    <name evidence="1" type="primary">env</name>
</gene>
<name>ENV_HV1W1</name>
<proteinExistence type="evidence at protein level"/>
<keyword id="KW-0002">3D-structure</keyword>
<keyword id="KW-0014">AIDS</keyword>
<keyword id="KW-0053">Apoptosis</keyword>
<keyword id="KW-1165">Clathrin-mediated endocytosis of virus by host</keyword>
<keyword id="KW-0165">Cleavage on pair of basic residues</keyword>
<keyword id="KW-0175">Coiled coil</keyword>
<keyword id="KW-1015">Disulfide bond</keyword>
<keyword id="KW-1170">Fusion of virus membrane with host endosomal membrane</keyword>
<keyword id="KW-1168">Fusion of virus membrane with host membrane</keyword>
<keyword id="KW-0325">Glycoprotein</keyword>
<keyword id="KW-1032">Host cell membrane</keyword>
<keyword id="KW-1039">Host endosome</keyword>
<keyword id="KW-1043">Host membrane</keyword>
<keyword id="KW-0945">Host-virus interaction</keyword>
<keyword id="KW-0449">Lipoprotein</keyword>
<keyword id="KW-0472">Membrane</keyword>
<keyword id="KW-0564">Palmitate</keyword>
<keyword id="KW-0732">Signal</keyword>
<keyword id="KW-0812">Transmembrane</keyword>
<keyword id="KW-1133">Transmembrane helix</keyword>
<keyword id="KW-1161">Viral attachment to host cell</keyword>
<keyword id="KW-0261">Viral envelope protein</keyword>
<keyword id="KW-0899">Viral immunoevasion</keyword>
<keyword id="KW-1162">Viral penetration into host cytoplasm</keyword>
<keyword id="KW-0946">Virion</keyword>
<keyword id="KW-1164">Virus endocytosis by host</keyword>
<keyword id="KW-1160">Virus entry into host cell</keyword>
<reference key="1">
    <citation type="journal article" date="1986" name="Cell">
        <title>Identification and characterization of conserved and variable regions in the envelope gene of HTLV-III/LAV, the retrovirus of AIDS.</title>
        <authorList>
            <person name="Starcich B.R."/>
            <person name="Hahn B.H."/>
            <person name="Shaw G.M."/>
            <person name="McNeely P.D."/>
            <person name="Modrow S."/>
            <person name="Wolf H."/>
            <person name="Parks E.S."/>
            <person name="Parks W.P."/>
            <person name="Josephs S.F."/>
            <person name="Gallo R.C."/>
            <person name="Wong-Staal F."/>
        </authorList>
    </citation>
    <scope>NUCLEOTIDE SEQUENCE [GENOMIC RNA]</scope>
</reference>
<reference key="2">
    <citation type="journal article" date="2003" name="APMIS">
        <title>Pathogens target DC-SIGN to influence their fate DC-SIGN functions as a pathogen receptor with broad specificity.</title>
        <authorList>
            <person name="Geijtenbeek T.B."/>
            <person name="van Kooyk Y."/>
        </authorList>
    </citation>
    <scope>REVIEW</scope>
</reference>
<reference key="3">
    <citation type="journal article" date="2003" name="Biochim. Biophys. Acta">
        <title>The HIV Env-mediated fusion reaction.</title>
        <authorList>
            <person name="Gallo S.A."/>
            <person name="Finnegan C.M."/>
            <person name="Viard M."/>
            <person name="Raviv Y."/>
            <person name="Dimitrov A."/>
            <person name="Rawat S.S."/>
            <person name="Puri A."/>
            <person name="Durell S."/>
            <person name="Blumenthal R."/>
        </authorList>
    </citation>
    <scope>REVIEW</scope>
</reference>
<reference key="4">
    <citation type="journal article" date="2005" name="Cell Death Differ.">
        <title>Mechanisms of apoptosis induction by the HIV-1 envelope.</title>
        <authorList>
            <person name="Perfettini J.-L."/>
            <person name="Castedo M."/>
            <person name="Roumier T."/>
            <person name="Andreau K."/>
            <person name="Nardacci R."/>
            <person name="Piacentini M."/>
            <person name="Kroemer G."/>
        </authorList>
    </citation>
    <scope>REVIEW</scope>
</reference>
<reference key="5">
    <citation type="journal article" date="2005" name="AIDS Res. Hum. Retroviruses">
        <title>V3: HIV's switch-hitter.</title>
        <authorList>
            <person name="Hartley O."/>
            <person name="Klasse P.J."/>
            <person name="Sattentau Q.J."/>
            <person name="Moore J.P."/>
        </authorList>
    </citation>
    <scope>REVIEW</scope>
</reference>
<reference key="6">
    <citation type="journal article" date="2005" name="Drugs">
        <title>Emerging drug targets for antiretroviral therapy.</title>
        <authorList>
            <person name="Reeves J.D."/>
            <person name="Piefer A.J."/>
        </authorList>
    </citation>
    <scope>REVIEW</scope>
</reference>
<reference key="7">
    <citation type="journal article" date="2006" name="EMBO J.">
        <title>HIV and the chemokine system: 10 years later.</title>
        <authorList>
            <person name="Lusso P."/>
        </authorList>
    </citation>
    <scope>REVIEW</scope>
</reference>
<protein>
    <recommendedName>
        <fullName evidence="1">Envelope glycoprotein gp160</fullName>
    </recommendedName>
    <alternativeName>
        <fullName evidence="1">Env polyprotein</fullName>
    </alternativeName>
    <component>
        <recommendedName>
            <fullName evidence="1">Surface protein gp120</fullName>
            <shortName evidence="1">SU</shortName>
        </recommendedName>
        <alternativeName>
            <fullName evidence="1">Glycoprotein 120</fullName>
            <shortName evidence="1">gp120</shortName>
        </alternativeName>
    </component>
    <component>
        <recommendedName>
            <fullName evidence="1">Transmembrane protein gp41</fullName>
            <shortName evidence="1">TM</shortName>
        </recommendedName>
        <alternativeName>
            <fullName evidence="1">Glycoprotein 41</fullName>
            <shortName evidence="1">gp41</shortName>
        </alternativeName>
    </component>
</protein>
<feature type="signal peptide" evidence="1">
    <location>
        <begin position="1"/>
        <end position="31"/>
    </location>
</feature>
<feature type="chain" id="PRO_0000239491" description="Envelope glycoprotein gp160" evidence="1">
    <location>
        <begin position="32"/>
        <end position="856"/>
    </location>
</feature>
<feature type="chain" id="PRO_0000038423" description="Surface protein gp120" evidence="1">
    <location>
        <begin position="32"/>
        <end position="510"/>
    </location>
</feature>
<feature type="chain" id="PRO_0000038424" description="Transmembrane protein gp41" evidence="1">
    <location>
        <begin position="511"/>
        <end position="856"/>
    </location>
</feature>
<feature type="topological domain" description="Extracellular" evidence="1">
    <location>
        <begin position="32"/>
        <end position="684"/>
    </location>
</feature>
<feature type="transmembrane region" description="Helical" evidence="1">
    <location>
        <begin position="685"/>
        <end position="705"/>
    </location>
</feature>
<feature type="topological domain" description="Cytoplasmic" evidence="1">
    <location>
        <begin position="706"/>
        <end position="856"/>
    </location>
</feature>
<feature type="region of interest" description="V1" evidence="1">
    <location>
        <begin position="130"/>
        <end position="151"/>
    </location>
</feature>
<feature type="region of interest" description="V2" evidence="1">
    <location>
        <begin position="152"/>
        <end position="196"/>
    </location>
</feature>
<feature type="region of interest" description="V3" evidence="1">
    <location>
        <begin position="296"/>
        <end position="329"/>
    </location>
</feature>
<feature type="region of interest" description="CD4-binding loop" evidence="1">
    <location>
        <begin position="362"/>
        <end position="372"/>
    </location>
</feature>
<feature type="region of interest" description="V4" evidence="1">
    <location>
        <begin position="383"/>
        <end position="417"/>
    </location>
</feature>
<feature type="region of interest" description="V5">
    <location>
        <begin position="460"/>
        <end position="470"/>
    </location>
</feature>
<feature type="region of interest" description="V5" evidence="1">
    <location>
        <begin position="462"/>
        <end position="470"/>
    </location>
</feature>
<feature type="region of interest" description="Fusion peptide" evidence="1">
    <location>
        <begin position="511"/>
        <end position="532"/>
    </location>
</feature>
<feature type="region of interest" description="Immunosuppression" evidence="1">
    <location>
        <begin position="574"/>
        <end position="592"/>
    </location>
</feature>
<feature type="region of interest" description="MPER; binding to GalCer" evidence="1">
    <location>
        <begin position="662"/>
        <end position="683"/>
    </location>
</feature>
<feature type="region of interest" description="Disordered" evidence="2">
    <location>
        <begin position="716"/>
        <end position="742"/>
    </location>
</feature>
<feature type="coiled-coil region" evidence="1">
    <location>
        <begin position="633"/>
        <end position="667"/>
    </location>
</feature>
<feature type="short sequence motif" description="YXXL motif; contains endocytosis signal" evidence="1">
    <location>
        <begin position="712"/>
        <end position="715"/>
    </location>
</feature>
<feature type="short sequence motif" description="Di-leucine internalization motif" evidence="1">
    <location>
        <begin position="855"/>
        <end position="856"/>
    </location>
</feature>
<feature type="site" description="Cleavage; by host furin" evidence="1">
    <location>
        <begin position="510"/>
        <end position="511"/>
    </location>
</feature>
<feature type="lipid moiety-binding region" description="S-palmitoyl cysteine; by host" evidence="1">
    <location>
        <position position="764"/>
    </location>
</feature>
<feature type="lipid moiety-binding region" description="S-palmitoyl cysteine; by host" evidence="1">
    <location>
        <position position="837"/>
    </location>
</feature>
<feature type="glycosylation site" description="N-linked (GlcNAc...) asparagine; by host" evidence="1">
    <location>
        <position position="87"/>
    </location>
</feature>
<feature type="glycosylation site" description="N-linked (GlcNAc...) asparagine; by host" evidence="1">
    <location>
        <position position="134"/>
    </location>
</feature>
<feature type="glycosylation site" description="N-linked (GlcNAc...) asparagine; by host" evidence="1">
    <location>
        <position position="140"/>
    </location>
</feature>
<feature type="glycosylation site" description="N-linked (GlcNAc...) asparagine; by host" evidence="1">
    <location>
        <position position="151"/>
    </location>
</feature>
<feature type="glycosylation site" description="N-linked (GlcNAc...) asparagine; by host" evidence="1">
    <location>
        <position position="155"/>
    </location>
</feature>
<feature type="glycosylation site" description="N-linked (GlcNAc...) asparagine; by host" evidence="1">
    <location>
        <position position="183"/>
    </location>
</feature>
<feature type="glycosylation site" description="N-linked (GlcNAc...) asparagine; by host" evidence="1">
    <location>
        <position position="197"/>
    </location>
</feature>
<feature type="glycosylation site" description="N-linked (GlcNAc...) asparagine; by host" evidence="1">
    <location>
        <position position="234"/>
    </location>
</feature>
<feature type="glycosylation site" description="N-linked (GlcNAc...) asparagine; by host" evidence="1">
    <location>
        <position position="241"/>
    </location>
</feature>
<feature type="glycosylation site" description="N-linked (GlcNAc...) asparagine; by host" evidence="1">
    <location>
        <position position="262"/>
    </location>
</feature>
<feature type="glycosylation site" description="N-linked (GlcNAc...) asparagine; by host" evidence="1">
    <location>
        <position position="276"/>
    </location>
</feature>
<feature type="glycosylation site" description="N-linked (GlcNAc...) asparagine; by host" evidence="1">
    <location>
        <position position="289"/>
    </location>
</feature>
<feature type="glycosylation site" description="N-linked (GlcNAc...) asparagine; by host" evidence="1">
    <location>
        <position position="295"/>
    </location>
</feature>
<feature type="glycosylation site" description="N-linked (GlcNAc...) asparagine; by host" evidence="1">
    <location>
        <position position="331"/>
    </location>
</feature>
<feature type="glycosylation site" description="N-linked (GlcNAc...) asparagine; by host" evidence="1">
    <location>
        <position position="338"/>
    </location>
</feature>
<feature type="glycosylation site" description="N-linked (GlcNAc...) asparagine; by host" evidence="1">
    <location>
        <position position="354"/>
    </location>
</feature>
<feature type="glycosylation site" description="N-linked (GlcNAc...) asparagine; by host" evidence="1">
    <location>
        <position position="360"/>
    </location>
</feature>
<feature type="glycosylation site" description="N-linked (GlcNAc...) asparagine; by host" evidence="1">
    <location>
        <position position="390"/>
    </location>
</feature>
<feature type="glycosylation site" description="N-linked (GlcNAc...) asparagine; by host" evidence="1">
    <location>
        <position position="394"/>
    </location>
</feature>
<feature type="glycosylation site" description="N-linked (GlcNAc...) asparagine; by host" evidence="1">
    <location>
        <position position="404"/>
    </location>
</feature>
<feature type="glycosylation site" description="N-linked (GlcNAc...) asparagine; by host" evidence="1">
    <location>
        <position position="447"/>
    </location>
</feature>
<feature type="glycosylation site" description="N-linked (GlcNAc...) asparagine; by host" evidence="1">
    <location>
        <position position="459"/>
    </location>
</feature>
<feature type="glycosylation site" description="N-linked (GlcNAc...) asparagine; by host" evidence="1">
    <location>
        <position position="611"/>
    </location>
</feature>
<feature type="glycosylation site" description="N-linked (GlcNAc...) asparagine; by host" evidence="1">
    <location>
        <position position="616"/>
    </location>
</feature>
<feature type="glycosylation site" description="N-linked (GlcNAc...) asparagine; by host" evidence="1">
    <location>
        <position position="625"/>
    </location>
</feature>
<feature type="glycosylation site" description="N-linked (GlcNAc...) asparagine; by host" evidence="1">
    <location>
        <position position="637"/>
    </location>
</feature>
<feature type="disulfide bond" evidence="1">
    <location>
        <begin position="53"/>
        <end position="73"/>
    </location>
</feature>
<feature type="disulfide bond" evidence="1">
    <location>
        <begin position="118"/>
        <end position="205"/>
    </location>
</feature>
<feature type="disulfide bond" evidence="1">
    <location>
        <begin position="125"/>
        <end position="196"/>
    </location>
</feature>
<feature type="disulfide bond" evidence="1">
    <location>
        <begin position="130"/>
        <end position="152"/>
    </location>
</feature>
<feature type="disulfide bond" evidence="1">
    <location>
        <begin position="218"/>
        <end position="247"/>
    </location>
</feature>
<feature type="disulfide bond" evidence="1">
    <location>
        <begin position="228"/>
        <end position="239"/>
    </location>
</feature>
<feature type="disulfide bond" evidence="1">
    <location>
        <begin position="296"/>
        <end position="330"/>
    </location>
</feature>
<feature type="disulfide bond" evidence="1">
    <location>
        <begin position="376"/>
        <end position="444"/>
    </location>
</feature>
<feature type="disulfide bond" evidence="1">
    <location>
        <begin position="383"/>
        <end position="417"/>
    </location>
</feature>
<feature type="disulfide bond" evidence="1">
    <location>
        <begin position="598"/>
        <end position="604"/>
    </location>
</feature>
<feature type="helix" evidence="3">
    <location>
        <begin position="662"/>
        <end position="670"/>
    </location>
</feature>
<comment type="function">
    <molecule>Envelope glycoprotein gp160</molecule>
    <text evidence="1">Oligomerizes in the host endoplasmic reticulum into predominantly trimers. In a second time, gp160 transits in the host Golgi, where glycosylation is completed. The precursor is then proteolytically cleaved in the trans-Golgi and thereby activated by cellular furin or furin-like proteases to produce gp120 and gp41.</text>
</comment>
<comment type="function">
    <molecule>Surface protein gp120</molecule>
    <text evidence="1">Attaches the virus to the host lymphoid cell by binding to the primary receptor CD4. This interaction induces a structural rearrangement creating a high affinity binding site for a chemokine coreceptor like CXCR4 and/or CCR5. Acts as a ligand for CD209/DC-SIGN and CLEC4M/DC-SIGNR, which are respectively found on dendritic cells (DCs), and on endothelial cells of liver sinusoids and lymph node sinuses. These interactions allow capture of viral particles at mucosal surfaces by these cells and subsequent transmission to permissive cells. HIV subverts the migration properties of dendritic cells to gain access to CD4+ T-cells in lymph nodes. Virus transmission to permissive T-cells occurs either in trans (without DCs infection, through viral capture and transmission), or in cis (following DCs productive infection, through the usual CD4-gp120 interaction), thereby inducing a robust infection. In trans infection, bound virions remain infectious over days and it is proposed that they are not degraded, but protected in non-lysosomal acidic organelles within the DCs close to the cell membrane thus contributing to the viral infectious potential during DCs' migration from the periphery to the lymphoid tissues. On arrival at lymphoid tissues, intact virions recycle back to DCs' cell surface allowing virus transmission to CD4+ T-cells.</text>
</comment>
<comment type="function">
    <molecule>Transmembrane protein gp41</molecule>
    <text evidence="1">Acts as a class I viral fusion protein. Under the current model, the protein has at least 3 conformational states: pre-fusion native state, pre-hairpin intermediate state, and post-fusion hairpin state. During fusion of viral and target intracellular membranes, the coiled coil regions (heptad repeats) assume a trimer-of-hairpins structure, positioning the fusion peptide in close proximity to the C-terminal region of the ectodomain. The formation of this structure appears to drive apposition and subsequent fusion of viral and target cell membranes. Complete fusion occurs in host cell endosomes and is dynamin-dependent, however some lipid transfer might occur at the plasma membrane. The virus undergoes clathrin-dependent internalization long before endosomal fusion, thus minimizing the surface exposure of conserved viral epitopes during fusion and reducing the efficacy of inhibitors targeting these epitopes. Membranes fusion leads to delivery of the nucleocapsid into the cytoplasm.</text>
</comment>
<comment type="subunit">
    <molecule>Surface protein gp120</molecule>
    <text evidence="1">The mature envelope protein (Env) consists of a homotrimer of non-covalently associated gp120-gp41 heterodimers. The resulting complex protrudes from the virus surface as a spike. There seems to be as few as 10 spikes on the average virion. Interacts with host CD4, CCR5 and CXCR4. Gp120 also interacts with the C-type lectins CD209/DC-SIGN and CLEC4M/DC-SIGNR (collectively referred to as DC-SIGN(R)). Gp120 and gp41 interact with GalCer. Gp120 interacts with host ITGA4/ITGB7 complex; on CD4+ T-cells, this interaction results in rapid activation of integrin ITGAL/LFA-1, which facilitates efficient cell-to-cell spreading of HIV-1. Gp120 interacts with cell-associated heparan sulfate; this interaction increases virus infectivity on permissive cells and may be involved in infection of CD4- cells.</text>
</comment>
<comment type="subunit">
    <molecule>Transmembrane protein gp41</molecule>
    <text evidence="1">The mature envelope protein (Env) consists of a homotrimer of non-covalently associated gp120-gp41 heterodimers. The resulting complex protrudes from the virus surface as a spike. There seems to be as few as 10 spikes on the average virion.</text>
</comment>
<comment type="subcellular location">
    <molecule>Surface protein gp120</molecule>
    <subcellularLocation>
        <location evidence="1">Virion membrane</location>
        <topology evidence="1">Peripheral membrane protein</topology>
    </subcellularLocation>
    <subcellularLocation>
        <location evidence="1">Host cell membrane</location>
        <topology evidence="1">Peripheral membrane protein</topology>
    </subcellularLocation>
    <subcellularLocation>
        <location evidence="1">Host endosome membrane</location>
        <topology evidence="1">Single-pass type I membrane protein</topology>
    </subcellularLocation>
    <text evidence="1">The surface protein is not anchored to the viral envelope, but associates with the extravirion surface through its binding to TM. It is probably concentrated at the site of budding and incorporated into the virions possibly by contacts between the cytoplasmic tail of Env and the N-terminus of Gag.</text>
</comment>
<comment type="subcellular location">
    <molecule>Transmembrane protein gp41</molecule>
    <subcellularLocation>
        <location evidence="1">Virion membrane</location>
        <topology evidence="1">Single-pass type I membrane protein</topology>
    </subcellularLocation>
    <subcellularLocation>
        <location evidence="1">Host cell membrane</location>
        <topology evidence="1">Single-pass type I membrane protein</topology>
    </subcellularLocation>
    <subcellularLocation>
        <location evidence="1">Host endosome membrane</location>
        <topology evidence="1">Single-pass type I membrane protein</topology>
    </subcellularLocation>
    <text evidence="1">It is probably concentrated at the site of budding and incorporated into the virions possibly by contacts between the cytoplasmic tail of Env and the N-terminus of Gag.</text>
</comment>
<comment type="domain">
    <text evidence="1">Some of the most genetically diverse regions of the viral genome are present in Env. They are called variable regions 1 through 5 (V1 through V5). Coreceptor usage of gp120 is determined mainly by the primary structure of the third variable region (V3) in the outer domain of gp120. The sequence of V3 determines which coreceptor, CCR5 and/or CXCR4 (corresponding to R5/macrophage, X4/T cell and R5X4/T cell and macrophage tropism), is used to trigger the fusion potential of the Env complex, and hence which cells the virus can infect. Binding to CCR5 involves a region adjacent in addition to V3.</text>
</comment>
<comment type="domain">
    <text evidence="1">The membrane proximal external region (MPER) present in gp41 is a tryptophan-rich region recognized by the antibodies 2F5, Z13, and 4E10. MPER seems to play a role in fusion.</text>
</comment>
<comment type="domain">
    <text evidence="1">The 17 amino acids long immunosuppressive region is present in many retroviral envelope proteins. Synthetic peptides derived from this relatively conserved sequence inhibit immune function in vitro and in vivo.</text>
</comment>
<comment type="domain">
    <text evidence="1">The YXXL motif is involved in determining the exact site of viral release at the surface of infected mononuclear cells and promotes endocytosis. YXXL and di-leucine endocytosis motifs interact directly or indirectly with the clathrin adapter complexes, opperate independently, and their activities are not additive.</text>
</comment>
<comment type="domain">
    <text evidence="1">The CD4-binding region is targeted by the antibody b12.</text>
</comment>
<comment type="PTM">
    <text evidence="1">Highly glycosylated by host. The high number of glycan on the protein is reffered to as 'glycan shield' because it contributes to hide protein sequence from adaptive immune system.</text>
</comment>
<comment type="PTM">
    <text evidence="1">Palmitoylation of the transmembrane protein and of Env polyprotein (prior to its proteolytic cleavage) is essential for their association with host cell membrane lipid rafts. Palmitoylation is therefore required for envelope trafficking to classical lipid rafts, but not for viral replication.</text>
</comment>
<comment type="PTM">
    <text evidence="1">Specific enzymatic cleavages in vivo yield mature proteins. Envelope glycoproteins are synthesized as an inactive precursor that is heavily N-glycosylated and processed likely by host cell furin in the Golgi to yield the mature SU and TM proteins. The cleavage site between SU and TM requires the minimal sequence [KR]-X-[KR]-R. About 2 of the 9 disulfide bonds of gp41 are reduced by P4HB/PDI, following binding to CD4 receptor.</text>
</comment>
<comment type="miscellaneous">
    <text evidence="1">Inhibitors targeting HIV-1 viral envelope proteins are used as antiretroviral drugs. Attachment of virions to the cell surface via non-specific interactions and CD4 binding can be blocked by inhibitors that include cyanovirin-N, cyclotriazadisulfonamide analogs, PRO 2000, TNX 355 and PRO 542. In addition, BMS 806 can block CD4-induced conformational changes. Env interactions with the coreceptor molecules can be targeted by CCR5 antagonists including SCH-D, maraviroc (UK 427857) and aplaviroc (GW 873140), and the CXCR4 antagonist AMD 070. Fusion of viral and cellular membranes can be inhibited by peptides such as enfuvirtide and tifuvirtide (T 1249). Resistance to inhibitors associated with mutations in Env are observed. Most of the time, single mutations confer only a modest reduction in drug susceptibility. Combination of several mutations is usually required to develop a high-level drug resistance.</text>
</comment>
<comment type="miscellaneous">
    <text evidence="1">HIV-1 lineages are divided in three main groups, M (for Major), O (for Outlier), and N (for New, or Non-M, Non-O). The vast majority of strains found worldwide belong to the group M. Group O seems to be endemic to and largely confined to Cameroon and neighboring countries in West Central Africa, where these viruses represent a small minority of HIV-1 strains. The group N is represented by a limited number of isolates from Cameroonian persons. The group M is further subdivided in 9 clades or subtypes (A to D, F to H, J and K).</text>
</comment>
<comment type="similarity">
    <text evidence="1">Belongs to the HIV-1 env protein family.</text>
</comment>
<comment type="online information" name="hivdb">
    <link uri="https://hivdb.stanford.edu"/>
    <text>HIV drug resistance database</text>
</comment>
<comment type="online information" name="HIV drug resistance mutations">
    <link uri="https://www.iasusa.org/hiv-drug-resistance/hiv-drug-resistance-mutations/"/>
</comment>
<evidence type="ECO:0000255" key="1">
    <source>
        <dbReference type="HAMAP-Rule" id="MF_04083"/>
    </source>
</evidence>
<evidence type="ECO:0000256" key="2">
    <source>
        <dbReference type="SAM" id="MobiDB-lite"/>
    </source>
</evidence>
<evidence type="ECO:0007829" key="3">
    <source>
        <dbReference type="PDB" id="1LB0"/>
    </source>
</evidence>